<protein>
    <recommendedName>
        <fullName>Autophagy-related protein 22-1</fullName>
    </recommendedName>
</protein>
<keyword id="KW-0029">Amino-acid transport</keyword>
<keyword id="KW-0072">Autophagy</keyword>
<keyword id="KW-0325">Glycoprotein</keyword>
<keyword id="KW-0472">Membrane</keyword>
<keyword id="KW-1185">Reference proteome</keyword>
<keyword id="KW-0812">Transmembrane</keyword>
<keyword id="KW-1133">Transmembrane helix</keyword>
<keyword id="KW-0813">Transport</keyword>
<keyword id="KW-0926">Vacuole</keyword>
<gene>
    <name type="primary">atg22-1</name>
    <name type="ORF">AN7437</name>
</gene>
<proteinExistence type="inferred from homology"/>
<name>AT221_EMENI</name>
<comment type="function">
    <text evidence="1">Vacuolar effluxer which mediate the efflux of amino acids resulting from autophagic degradation. The release of autophagic amino acids allows the maintenance of protein synthesis and viability during nitrogen starvation (By similarity).</text>
</comment>
<comment type="subcellular location">
    <subcellularLocation>
        <location evidence="1">Vacuole membrane</location>
        <topology evidence="1">Multi-pass membrane protein</topology>
    </subcellularLocation>
    <text evidence="1">Vacuole and punctate structures.</text>
</comment>
<comment type="similarity">
    <text evidence="3">Belongs to the ATG22 family.</text>
</comment>
<comment type="sequence caution" evidence="3">
    <conflict type="erroneous gene model prediction">
        <sequence resource="EMBL-CDS" id="EAA62017"/>
    </conflict>
</comment>
<reference key="1">
    <citation type="journal article" date="2005" name="Nature">
        <title>Sequencing of Aspergillus nidulans and comparative analysis with A. fumigatus and A. oryzae.</title>
        <authorList>
            <person name="Galagan J.E."/>
            <person name="Calvo S.E."/>
            <person name="Cuomo C."/>
            <person name="Ma L.-J."/>
            <person name="Wortman J.R."/>
            <person name="Batzoglou S."/>
            <person name="Lee S.-I."/>
            <person name="Bastuerkmen M."/>
            <person name="Spevak C.C."/>
            <person name="Clutterbuck J."/>
            <person name="Kapitonov V."/>
            <person name="Jurka J."/>
            <person name="Scazzocchio C."/>
            <person name="Farman M.L."/>
            <person name="Butler J."/>
            <person name="Purcell S."/>
            <person name="Harris S."/>
            <person name="Braus G.H."/>
            <person name="Draht O."/>
            <person name="Busch S."/>
            <person name="D'Enfert C."/>
            <person name="Bouchier C."/>
            <person name="Goldman G.H."/>
            <person name="Bell-Pedersen D."/>
            <person name="Griffiths-Jones S."/>
            <person name="Doonan J.H."/>
            <person name="Yu J."/>
            <person name="Vienken K."/>
            <person name="Pain A."/>
            <person name="Freitag M."/>
            <person name="Selker E.U."/>
            <person name="Archer D.B."/>
            <person name="Penalva M.A."/>
            <person name="Oakley B.R."/>
            <person name="Momany M."/>
            <person name="Tanaka T."/>
            <person name="Kumagai T."/>
            <person name="Asai K."/>
            <person name="Machida M."/>
            <person name="Nierman W.C."/>
            <person name="Denning D.W."/>
            <person name="Caddick M.X."/>
            <person name="Hynes M."/>
            <person name="Paoletti M."/>
            <person name="Fischer R."/>
            <person name="Miller B.L."/>
            <person name="Dyer P.S."/>
            <person name="Sachs M.S."/>
            <person name="Osmani S.A."/>
            <person name="Birren B.W."/>
        </authorList>
    </citation>
    <scope>NUCLEOTIDE SEQUENCE [LARGE SCALE GENOMIC DNA]</scope>
    <source>
        <strain>FGSC A4 / ATCC 38163 / CBS 112.46 / NRRL 194 / M139</strain>
    </source>
</reference>
<reference key="2">
    <citation type="journal article" date="2009" name="Fungal Genet. Biol.">
        <title>The 2008 update of the Aspergillus nidulans genome annotation: a community effort.</title>
        <authorList>
            <person name="Wortman J.R."/>
            <person name="Gilsenan J.M."/>
            <person name="Joardar V."/>
            <person name="Deegan J."/>
            <person name="Clutterbuck J."/>
            <person name="Andersen M.R."/>
            <person name="Archer D."/>
            <person name="Bencina M."/>
            <person name="Braus G."/>
            <person name="Coutinho P."/>
            <person name="von Dohren H."/>
            <person name="Doonan J."/>
            <person name="Driessen A.J."/>
            <person name="Durek P."/>
            <person name="Espeso E."/>
            <person name="Fekete E."/>
            <person name="Flipphi M."/>
            <person name="Estrada C.G."/>
            <person name="Geysens S."/>
            <person name="Goldman G."/>
            <person name="de Groot P.W."/>
            <person name="Hansen K."/>
            <person name="Harris S.D."/>
            <person name="Heinekamp T."/>
            <person name="Helmstaedt K."/>
            <person name="Henrissat B."/>
            <person name="Hofmann G."/>
            <person name="Homan T."/>
            <person name="Horio T."/>
            <person name="Horiuchi H."/>
            <person name="James S."/>
            <person name="Jones M."/>
            <person name="Karaffa L."/>
            <person name="Karanyi Z."/>
            <person name="Kato M."/>
            <person name="Keller N."/>
            <person name="Kelly D.E."/>
            <person name="Kiel J.A."/>
            <person name="Kim J.M."/>
            <person name="van der Klei I.J."/>
            <person name="Klis F.M."/>
            <person name="Kovalchuk A."/>
            <person name="Krasevec N."/>
            <person name="Kubicek C.P."/>
            <person name="Liu B."/>
            <person name="Maccabe A."/>
            <person name="Meyer V."/>
            <person name="Mirabito P."/>
            <person name="Miskei M."/>
            <person name="Mos M."/>
            <person name="Mullins J."/>
            <person name="Nelson D.R."/>
            <person name="Nielsen J."/>
            <person name="Oakley B.R."/>
            <person name="Osmani S.A."/>
            <person name="Pakula T."/>
            <person name="Paszewski A."/>
            <person name="Paulsen I."/>
            <person name="Pilsyk S."/>
            <person name="Pocsi I."/>
            <person name="Punt P.J."/>
            <person name="Ram A.F."/>
            <person name="Ren Q."/>
            <person name="Robellet X."/>
            <person name="Robson G."/>
            <person name="Seiboth B."/>
            <person name="van Solingen P."/>
            <person name="Specht T."/>
            <person name="Sun J."/>
            <person name="Taheri-Talesh N."/>
            <person name="Takeshita N."/>
            <person name="Ussery D."/>
            <person name="vanKuyk P.A."/>
            <person name="Visser H."/>
            <person name="van de Vondervoort P.J."/>
            <person name="de Vries R.P."/>
            <person name="Walton J."/>
            <person name="Xiang X."/>
            <person name="Xiong Y."/>
            <person name="Zeng A.P."/>
            <person name="Brandt B.W."/>
            <person name="Cornell M.J."/>
            <person name="van den Hondel C.A."/>
            <person name="Visser J."/>
            <person name="Oliver S.G."/>
            <person name="Turner G."/>
        </authorList>
    </citation>
    <scope>GENOME REANNOTATION</scope>
    <source>
        <strain>FGSC A4 / ATCC 38163 / CBS 112.46 / NRRL 194 / M139</strain>
    </source>
</reference>
<dbReference type="EMBL" id="AACD01000129">
    <property type="protein sequence ID" value="EAA62017.1"/>
    <property type="status" value="ALT_SEQ"/>
    <property type="molecule type" value="Genomic_DNA"/>
</dbReference>
<dbReference type="EMBL" id="BN001304">
    <property type="protein sequence ID" value="CBF79380.1"/>
    <property type="molecule type" value="Genomic_DNA"/>
</dbReference>
<dbReference type="RefSeq" id="XP_680706.1">
    <property type="nucleotide sequence ID" value="XM_675614.1"/>
</dbReference>
<dbReference type="FunCoup" id="Q5AW93">
    <property type="interactions" value="27"/>
</dbReference>
<dbReference type="STRING" id="227321.Q5AW93"/>
<dbReference type="GlyCosmos" id="Q5AW93">
    <property type="glycosylation" value="2 sites, No reported glycans"/>
</dbReference>
<dbReference type="EnsemblFungi" id="CBF79380">
    <property type="protein sequence ID" value="CBF79380"/>
    <property type="gene ID" value="ANIA_07437"/>
</dbReference>
<dbReference type="VEuPathDB" id="FungiDB:AN7437"/>
<dbReference type="eggNOG" id="ENOG502QR9I">
    <property type="taxonomic scope" value="Eukaryota"/>
</dbReference>
<dbReference type="HOGENOM" id="CLU_017518_1_0_1"/>
<dbReference type="InParanoid" id="Q5AW93"/>
<dbReference type="OMA" id="QQQWEMY"/>
<dbReference type="OrthoDB" id="192733at2759"/>
<dbReference type="Proteomes" id="UP000000560">
    <property type="component" value="Chromosome IV"/>
</dbReference>
<dbReference type="GO" id="GO:0005774">
    <property type="term" value="C:vacuolar membrane"/>
    <property type="evidence" value="ECO:0007669"/>
    <property type="project" value="UniProtKB-SubCell"/>
</dbReference>
<dbReference type="GO" id="GO:0032974">
    <property type="term" value="P:amino acid transmembrane export from vacuole"/>
    <property type="evidence" value="ECO:0000318"/>
    <property type="project" value="GO_Central"/>
</dbReference>
<dbReference type="GO" id="GO:0006914">
    <property type="term" value="P:autophagy"/>
    <property type="evidence" value="ECO:0007669"/>
    <property type="project" value="UniProtKB-KW"/>
</dbReference>
<dbReference type="CDD" id="cd17483">
    <property type="entry name" value="MFS_Atg22_like"/>
    <property type="match status" value="1"/>
</dbReference>
<dbReference type="FunFam" id="1.20.1250.20:FF:001231">
    <property type="entry name" value="Autophagy-related protein 22-1"/>
    <property type="match status" value="1"/>
</dbReference>
<dbReference type="Gene3D" id="1.20.1250.20">
    <property type="entry name" value="MFS general substrate transporter like domains"/>
    <property type="match status" value="1"/>
</dbReference>
<dbReference type="InterPro" id="IPR044738">
    <property type="entry name" value="Atg22"/>
</dbReference>
<dbReference type="InterPro" id="IPR024671">
    <property type="entry name" value="Atg22-like"/>
</dbReference>
<dbReference type="InterPro" id="IPR050495">
    <property type="entry name" value="ATG22/LtaA_families"/>
</dbReference>
<dbReference type="InterPro" id="IPR036259">
    <property type="entry name" value="MFS_trans_sf"/>
</dbReference>
<dbReference type="PANTHER" id="PTHR23519">
    <property type="entry name" value="AUTOPHAGY-RELATED PROTEIN 22"/>
    <property type="match status" value="1"/>
</dbReference>
<dbReference type="PANTHER" id="PTHR23519:SF1">
    <property type="entry name" value="AUTOPHAGY-RELATED PROTEIN 22"/>
    <property type="match status" value="1"/>
</dbReference>
<dbReference type="Pfam" id="PF11700">
    <property type="entry name" value="ATG22"/>
    <property type="match status" value="1"/>
</dbReference>
<dbReference type="SUPFAM" id="SSF103473">
    <property type="entry name" value="MFS general substrate transporter"/>
    <property type="match status" value="1"/>
</dbReference>
<sequence length="588" mass="64450">MQEDGIAEPGLLLPRYPGDDTRPTNKKELLGWYSYGWAAEVFTVCAMGSFLPITLEQMARERGVLLSDKTTPCTAIWKTPESSNTSWQNSSPAAAGQCIVYILGAEINTASFAMYTFSVSVLIQAILIISMSGAADHGSYRKTLLVSFAAIGSICTMLILAVTPKVYLLGGLFAIVANTCLGASFVLLNSFLPLLVRYHPSLLKEESGYMVRSPTENSGQPIATDCFSNDDPRAALLQGDGMTPEDTREFISSSNTSKELTISTRISSYGIGIGYIGAVFLQGICILVIVQTRQTTFSLRLVLFLIGLWWFIFTIPAAFWLRPRPGPPLLRAQDGKAYQSWLGYMAYAWKSLGRTAMRTRHLKDILLFLASWFLLSDGIATVSGTAVLFAKTQLNMEPAALGMINVITMISGVFGAFSWSYVSRVLNLRASQTIIACIFLFELVPLYGLLGFIPAIKNLGFLGLQQPWEMFPLGVIYGLVMGGLSSYCRSFFGQLIPPGYEASFYSLYAITDKGSSVFGPAIVGFITDHYGEIRPAFFFLAILILLPLPLMLLVDADRGKRDALALAEVLEARSSLEQRDYGTFSQQQ</sequence>
<accession>Q5AW93</accession>
<accession>C8VBB1</accession>
<organism>
    <name type="scientific">Emericella nidulans (strain FGSC A4 / ATCC 38163 / CBS 112.46 / NRRL 194 / M139)</name>
    <name type="common">Aspergillus nidulans</name>
    <dbReference type="NCBI Taxonomy" id="227321"/>
    <lineage>
        <taxon>Eukaryota</taxon>
        <taxon>Fungi</taxon>
        <taxon>Dikarya</taxon>
        <taxon>Ascomycota</taxon>
        <taxon>Pezizomycotina</taxon>
        <taxon>Eurotiomycetes</taxon>
        <taxon>Eurotiomycetidae</taxon>
        <taxon>Eurotiales</taxon>
        <taxon>Aspergillaceae</taxon>
        <taxon>Aspergillus</taxon>
        <taxon>Aspergillus subgen. Nidulantes</taxon>
    </lineage>
</organism>
<evidence type="ECO:0000250" key="1"/>
<evidence type="ECO:0000255" key="2"/>
<evidence type="ECO:0000305" key="3"/>
<feature type="chain" id="PRO_0000207622" description="Autophagy-related protein 22-1">
    <location>
        <begin position="1"/>
        <end position="588"/>
    </location>
</feature>
<feature type="transmembrane region" description="Helical" evidence="2">
    <location>
        <begin position="35"/>
        <end position="55"/>
    </location>
</feature>
<feature type="transmembrane region" description="Helical" evidence="2">
    <location>
        <begin position="109"/>
        <end position="129"/>
    </location>
</feature>
<feature type="transmembrane region" description="Helical" evidence="2">
    <location>
        <begin position="144"/>
        <end position="164"/>
    </location>
</feature>
<feature type="transmembrane region" description="Helical" evidence="2">
    <location>
        <begin position="168"/>
        <end position="188"/>
    </location>
</feature>
<feature type="transmembrane region" description="Helical" evidence="2">
    <location>
        <begin position="270"/>
        <end position="290"/>
    </location>
</feature>
<feature type="transmembrane region" description="Helical" evidence="2">
    <location>
        <begin position="301"/>
        <end position="321"/>
    </location>
</feature>
<feature type="transmembrane region" description="Helical" evidence="2">
    <location>
        <begin position="365"/>
        <end position="385"/>
    </location>
</feature>
<feature type="transmembrane region" description="Helical" evidence="2">
    <location>
        <begin position="399"/>
        <end position="419"/>
    </location>
</feature>
<feature type="transmembrane region" description="Helical" evidence="2">
    <location>
        <begin position="434"/>
        <end position="454"/>
    </location>
</feature>
<feature type="transmembrane region" description="Helical" evidence="2">
    <location>
        <begin position="471"/>
        <end position="493"/>
    </location>
</feature>
<feature type="transmembrane region" description="Helical" evidence="2">
    <location>
        <begin position="507"/>
        <end position="527"/>
    </location>
</feature>
<feature type="transmembrane region" description="Helical" evidence="2">
    <location>
        <begin position="536"/>
        <end position="556"/>
    </location>
</feature>
<feature type="glycosylation site" description="N-linked (GlcNAc...) asparagine" evidence="2">
    <location>
        <position position="84"/>
    </location>
</feature>
<feature type="glycosylation site" description="N-linked (GlcNAc...) asparagine" evidence="2">
    <location>
        <position position="255"/>
    </location>
</feature>